<comment type="function">
    <text evidence="1">Involved in the efflux of sugars. The physiological role may be the reduction of the intracellular concentration of toxic sugars or sugar metabolites.</text>
</comment>
<comment type="subcellular location">
    <subcellularLocation>
        <location evidence="1">Cell inner membrane</location>
        <topology evidence="1">Multi-pass membrane protein</topology>
    </subcellularLocation>
</comment>
<comment type="similarity">
    <text evidence="1">Belongs to the major facilitator superfamily. SotB (TC 2.A.1.2) family.</text>
</comment>
<sequence length="396" mass="41841">MDSTSETRSGSWLSVIALALAAFIFNTTEFVPVGLLSDIGHSFEMPTSQVGLMLTIYAWVVSLASLPMMLLTRNIERRKLLVGVFLLFIASHVLSGLAWSFQVLMLSRIGIAFAHAVFWAITASLAVRVAPPGQQAKALGLLATGTTLAMVLGIPLGRVVGEALGWRTTFMAIAGLSVLTLLYLARSLPLLPSQNSGSLRSLPMLFRRPALVCLYVLTVVVISAQFTAYSYIEPFAKQVAQMSGEATTLLLLLFGGAGIFGSILFSRYSEAFPRGFLLAAILALGSSLALLLPLSAQPTWLMALSLLWGMSIMCFGLAQQSRVLRLASDATDVAMALFSGLYNVGIGAGALLGSVVSERMGLASIGNVGAALALAGLLLALFAALRYAEALKSTSL</sequence>
<gene>
    <name evidence="1" type="primary">sotB</name>
    <name type="ordered locus">PA4113</name>
</gene>
<accession>Q9HWR7</accession>
<keyword id="KW-0997">Cell inner membrane</keyword>
<keyword id="KW-1003">Cell membrane</keyword>
<keyword id="KW-0472">Membrane</keyword>
<keyword id="KW-1185">Reference proteome</keyword>
<keyword id="KW-0762">Sugar transport</keyword>
<keyword id="KW-0812">Transmembrane</keyword>
<keyword id="KW-1133">Transmembrane helix</keyword>
<keyword id="KW-0813">Transport</keyword>
<feature type="chain" id="PRO_0000209331" description="Probable sugar efflux transporter">
    <location>
        <begin position="1"/>
        <end position="396"/>
    </location>
</feature>
<feature type="transmembrane region" description="Helical" evidence="1">
    <location>
        <begin position="15"/>
        <end position="35"/>
    </location>
</feature>
<feature type="transmembrane region" description="Helical" evidence="1">
    <location>
        <begin position="50"/>
        <end position="70"/>
    </location>
</feature>
<feature type="transmembrane region" description="Helical" evidence="1">
    <location>
        <begin position="81"/>
        <end position="101"/>
    </location>
</feature>
<feature type="transmembrane region" description="Helical" evidence="1">
    <location>
        <begin position="103"/>
        <end position="123"/>
    </location>
</feature>
<feature type="transmembrane region" description="Helical" evidence="1">
    <location>
        <begin position="136"/>
        <end position="156"/>
    </location>
</feature>
<feature type="transmembrane region" description="Helical" evidence="1">
    <location>
        <begin position="170"/>
        <end position="190"/>
    </location>
</feature>
<feature type="transmembrane region" description="Helical" evidence="1">
    <location>
        <begin position="209"/>
        <end position="229"/>
    </location>
</feature>
<feature type="transmembrane region" description="Helical" evidence="1">
    <location>
        <begin position="246"/>
        <end position="266"/>
    </location>
</feature>
<feature type="transmembrane region" description="Helical" evidence="1">
    <location>
        <begin position="276"/>
        <end position="296"/>
    </location>
</feature>
<feature type="transmembrane region" description="Helical" evidence="1">
    <location>
        <begin position="298"/>
        <end position="318"/>
    </location>
</feature>
<feature type="transmembrane region" description="Helical" evidence="1">
    <location>
        <begin position="333"/>
        <end position="353"/>
    </location>
</feature>
<feature type="transmembrane region" description="Helical" evidence="1">
    <location>
        <begin position="365"/>
        <end position="385"/>
    </location>
</feature>
<name>SOTB_PSEAE</name>
<protein>
    <recommendedName>
        <fullName evidence="1">Probable sugar efflux transporter</fullName>
    </recommendedName>
</protein>
<dbReference type="EMBL" id="AE004091">
    <property type="protein sequence ID" value="AAG07500.1"/>
    <property type="molecule type" value="Genomic_DNA"/>
</dbReference>
<dbReference type="PIR" id="F83130">
    <property type="entry name" value="F83130"/>
</dbReference>
<dbReference type="RefSeq" id="NP_252802.1">
    <property type="nucleotide sequence ID" value="NC_002516.2"/>
</dbReference>
<dbReference type="RefSeq" id="WP_003093428.1">
    <property type="nucleotide sequence ID" value="NZ_QZGE01000013.1"/>
</dbReference>
<dbReference type="SMR" id="Q9HWR7"/>
<dbReference type="FunCoup" id="Q9HWR7">
    <property type="interactions" value="69"/>
</dbReference>
<dbReference type="STRING" id="208964.PA4113"/>
<dbReference type="PaxDb" id="208964-PA4113"/>
<dbReference type="GeneID" id="880871"/>
<dbReference type="KEGG" id="pae:PA4113"/>
<dbReference type="PATRIC" id="fig|208964.12.peg.4310"/>
<dbReference type="PseudoCAP" id="PA4113"/>
<dbReference type="HOGENOM" id="CLU_001265_61_1_6"/>
<dbReference type="InParanoid" id="Q9HWR7"/>
<dbReference type="OrthoDB" id="9788453at2"/>
<dbReference type="PhylomeDB" id="Q9HWR7"/>
<dbReference type="BioCyc" id="PAER208964:G1FZ6-4186-MONOMER"/>
<dbReference type="Proteomes" id="UP000002438">
    <property type="component" value="Chromosome"/>
</dbReference>
<dbReference type="GO" id="GO:0005886">
    <property type="term" value="C:plasma membrane"/>
    <property type="evidence" value="ECO:0000318"/>
    <property type="project" value="GO_Central"/>
</dbReference>
<dbReference type="GO" id="GO:0015144">
    <property type="term" value="F:carbohydrate transmembrane transporter activity"/>
    <property type="evidence" value="ECO:0007669"/>
    <property type="project" value="UniProtKB-UniRule"/>
</dbReference>
<dbReference type="GO" id="GO:0022857">
    <property type="term" value="F:transmembrane transporter activity"/>
    <property type="evidence" value="ECO:0000318"/>
    <property type="project" value="GO_Central"/>
</dbReference>
<dbReference type="GO" id="GO:0055085">
    <property type="term" value="P:transmembrane transport"/>
    <property type="evidence" value="ECO:0000318"/>
    <property type="project" value="GO_Central"/>
</dbReference>
<dbReference type="CDD" id="cd17324">
    <property type="entry name" value="MFS_NepI_like"/>
    <property type="match status" value="1"/>
</dbReference>
<dbReference type="Gene3D" id="1.20.1250.20">
    <property type="entry name" value="MFS general substrate transporter like domains"/>
    <property type="match status" value="1"/>
</dbReference>
<dbReference type="HAMAP" id="MF_00517">
    <property type="entry name" value="MFS_SotB"/>
    <property type="match status" value="1"/>
</dbReference>
<dbReference type="InterPro" id="IPR011701">
    <property type="entry name" value="MFS"/>
</dbReference>
<dbReference type="InterPro" id="IPR020846">
    <property type="entry name" value="MFS_dom"/>
</dbReference>
<dbReference type="InterPro" id="IPR050189">
    <property type="entry name" value="MFS_Efflux_Transporters"/>
</dbReference>
<dbReference type="InterPro" id="IPR036259">
    <property type="entry name" value="MFS_trans_sf"/>
</dbReference>
<dbReference type="InterPro" id="IPR023495">
    <property type="entry name" value="Sugar_effux_transptr_put"/>
</dbReference>
<dbReference type="NCBIfam" id="NF002921">
    <property type="entry name" value="PRK03545.1"/>
    <property type="match status" value="1"/>
</dbReference>
<dbReference type="PANTHER" id="PTHR43124">
    <property type="entry name" value="PURINE EFFLUX PUMP PBUE"/>
    <property type="match status" value="1"/>
</dbReference>
<dbReference type="PANTHER" id="PTHR43124:SF4">
    <property type="entry name" value="SUGAR EFFLUX TRANSPORTER"/>
    <property type="match status" value="1"/>
</dbReference>
<dbReference type="Pfam" id="PF07690">
    <property type="entry name" value="MFS_1"/>
    <property type="match status" value="1"/>
</dbReference>
<dbReference type="SUPFAM" id="SSF103473">
    <property type="entry name" value="MFS general substrate transporter"/>
    <property type="match status" value="1"/>
</dbReference>
<dbReference type="PROSITE" id="PS50850">
    <property type="entry name" value="MFS"/>
    <property type="match status" value="1"/>
</dbReference>
<proteinExistence type="inferred from homology"/>
<reference key="1">
    <citation type="journal article" date="2000" name="Nature">
        <title>Complete genome sequence of Pseudomonas aeruginosa PAO1, an opportunistic pathogen.</title>
        <authorList>
            <person name="Stover C.K."/>
            <person name="Pham X.-Q.T."/>
            <person name="Erwin A.L."/>
            <person name="Mizoguchi S.D."/>
            <person name="Warrener P."/>
            <person name="Hickey M.J."/>
            <person name="Brinkman F.S.L."/>
            <person name="Hufnagle W.O."/>
            <person name="Kowalik D.J."/>
            <person name="Lagrou M."/>
            <person name="Garber R.L."/>
            <person name="Goltry L."/>
            <person name="Tolentino E."/>
            <person name="Westbrock-Wadman S."/>
            <person name="Yuan Y."/>
            <person name="Brody L.L."/>
            <person name="Coulter S.N."/>
            <person name="Folger K.R."/>
            <person name="Kas A."/>
            <person name="Larbig K."/>
            <person name="Lim R.M."/>
            <person name="Smith K.A."/>
            <person name="Spencer D.H."/>
            <person name="Wong G.K.-S."/>
            <person name="Wu Z."/>
            <person name="Paulsen I.T."/>
            <person name="Reizer J."/>
            <person name="Saier M.H. Jr."/>
            <person name="Hancock R.E.W."/>
            <person name="Lory S."/>
            <person name="Olson M.V."/>
        </authorList>
    </citation>
    <scope>NUCLEOTIDE SEQUENCE [LARGE SCALE GENOMIC DNA]</scope>
    <source>
        <strain>ATCC 15692 / DSM 22644 / CIP 104116 / JCM 14847 / LMG 12228 / 1C / PRS 101 / PAO1</strain>
    </source>
</reference>
<organism>
    <name type="scientific">Pseudomonas aeruginosa (strain ATCC 15692 / DSM 22644 / CIP 104116 / JCM 14847 / LMG 12228 / 1C / PRS 101 / PAO1)</name>
    <dbReference type="NCBI Taxonomy" id="208964"/>
    <lineage>
        <taxon>Bacteria</taxon>
        <taxon>Pseudomonadati</taxon>
        <taxon>Pseudomonadota</taxon>
        <taxon>Gammaproteobacteria</taxon>
        <taxon>Pseudomonadales</taxon>
        <taxon>Pseudomonadaceae</taxon>
        <taxon>Pseudomonas</taxon>
    </lineage>
</organism>
<evidence type="ECO:0000255" key="1">
    <source>
        <dbReference type="HAMAP-Rule" id="MF_00517"/>
    </source>
</evidence>